<organism>
    <name type="scientific">Lepidium virginicum</name>
    <name type="common">Virginia pepperweed</name>
    <dbReference type="NCBI Taxonomy" id="59292"/>
    <lineage>
        <taxon>Eukaryota</taxon>
        <taxon>Viridiplantae</taxon>
        <taxon>Streptophyta</taxon>
        <taxon>Embryophyta</taxon>
        <taxon>Tracheophyta</taxon>
        <taxon>Spermatophyta</taxon>
        <taxon>Magnoliopsida</taxon>
        <taxon>eudicotyledons</taxon>
        <taxon>Gunneridae</taxon>
        <taxon>Pentapetalae</taxon>
        <taxon>rosids</taxon>
        <taxon>malvids</taxon>
        <taxon>Brassicales</taxon>
        <taxon>Brassicaceae</taxon>
        <taxon>Lepidieae</taxon>
        <taxon>Lepidium</taxon>
    </lineage>
</organism>
<evidence type="ECO:0000250" key="1"/>
<evidence type="ECO:0000305" key="2"/>
<gene>
    <name type="primary">rpl22</name>
</gene>
<geneLocation type="chloroplast"/>
<keyword id="KW-0150">Chloroplast</keyword>
<keyword id="KW-0934">Plastid</keyword>
<keyword id="KW-0687">Ribonucleoprotein</keyword>
<keyword id="KW-0689">Ribosomal protein</keyword>
<keyword id="KW-0694">RNA-binding</keyword>
<keyword id="KW-0699">rRNA-binding</keyword>
<reference key="1">
    <citation type="submission" date="2007-03" db="EMBL/GenBank/DDBJ databases">
        <title>Sequencing analysis of Lepidium virginicum JO26 chloroplast DNA.</title>
        <authorList>
            <person name="Hosouchi T."/>
            <person name="Tsuruoka H."/>
            <person name="Kotani H."/>
        </authorList>
    </citation>
    <scope>NUCLEOTIDE SEQUENCE [LARGE SCALE GENOMIC DNA]</scope>
</reference>
<feature type="chain" id="PRO_0000354579" description="Large ribosomal subunit protein uL22c">
    <location>
        <begin position="1"/>
        <end position="160"/>
    </location>
</feature>
<dbReference type="EMBL" id="AP009374">
    <property type="protein sequence ID" value="BAF50500.1"/>
    <property type="molecule type" value="Genomic_DNA"/>
</dbReference>
<dbReference type="RefSeq" id="YP_001123676.1">
    <property type="nucleotide sequence ID" value="NC_009273.1"/>
</dbReference>
<dbReference type="SMR" id="A4QLE5"/>
<dbReference type="GeneID" id="4962012"/>
<dbReference type="GO" id="GO:0009507">
    <property type="term" value="C:chloroplast"/>
    <property type="evidence" value="ECO:0007669"/>
    <property type="project" value="UniProtKB-SubCell"/>
</dbReference>
<dbReference type="GO" id="GO:0015934">
    <property type="term" value="C:large ribosomal subunit"/>
    <property type="evidence" value="ECO:0007669"/>
    <property type="project" value="InterPro"/>
</dbReference>
<dbReference type="GO" id="GO:0019843">
    <property type="term" value="F:rRNA binding"/>
    <property type="evidence" value="ECO:0007669"/>
    <property type="project" value="UniProtKB-UniRule"/>
</dbReference>
<dbReference type="GO" id="GO:0003735">
    <property type="term" value="F:structural constituent of ribosome"/>
    <property type="evidence" value="ECO:0007669"/>
    <property type="project" value="InterPro"/>
</dbReference>
<dbReference type="GO" id="GO:0006412">
    <property type="term" value="P:translation"/>
    <property type="evidence" value="ECO:0007669"/>
    <property type="project" value="UniProtKB-UniRule"/>
</dbReference>
<dbReference type="CDD" id="cd00336">
    <property type="entry name" value="Ribosomal_L22"/>
    <property type="match status" value="1"/>
</dbReference>
<dbReference type="FunFam" id="3.90.470.10:FF:000006">
    <property type="entry name" value="50S ribosomal protein L22, chloroplastic"/>
    <property type="match status" value="1"/>
</dbReference>
<dbReference type="Gene3D" id="3.90.470.10">
    <property type="entry name" value="Ribosomal protein L22/L17"/>
    <property type="match status" value="1"/>
</dbReference>
<dbReference type="HAMAP" id="MF_01331_B">
    <property type="entry name" value="Ribosomal_uL22_B"/>
    <property type="match status" value="1"/>
</dbReference>
<dbReference type="InterPro" id="IPR001063">
    <property type="entry name" value="Ribosomal_uL22"/>
</dbReference>
<dbReference type="InterPro" id="IPR005727">
    <property type="entry name" value="Ribosomal_uL22_bac/chlpt-type"/>
</dbReference>
<dbReference type="InterPro" id="IPR047867">
    <property type="entry name" value="Ribosomal_uL22_bac/org-type"/>
</dbReference>
<dbReference type="InterPro" id="IPR018260">
    <property type="entry name" value="Ribosomal_uL22_CS"/>
</dbReference>
<dbReference type="InterPro" id="IPR036394">
    <property type="entry name" value="Ribosomal_uL22_sf"/>
</dbReference>
<dbReference type="NCBIfam" id="TIGR01044">
    <property type="entry name" value="rplV_bact"/>
    <property type="match status" value="1"/>
</dbReference>
<dbReference type="PANTHER" id="PTHR13501">
    <property type="entry name" value="CHLOROPLAST 50S RIBOSOMAL PROTEIN L22-RELATED"/>
    <property type="match status" value="1"/>
</dbReference>
<dbReference type="PANTHER" id="PTHR13501:SF10">
    <property type="entry name" value="LARGE RIBOSOMAL SUBUNIT PROTEIN UL22M"/>
    <property type="match status" value="1"/>
</dbReference>
<dbReference type="Pfam" id="PF00237">
    <property type="entry name" value="Ribosomal_L22"/>
    <property type="match status" value="1"/>
</dbReference>
<dbReference type="SUPFAM" id="SSF54843">
    <property type="entry name" value="Ribosomal protein L22"/>
    <property type="match status" value="1"/>
</dbReference>
<dbReference type="PROSITE" id="PS00464">
    <property type="entry name" value="RIBOSOMAL_L22"/>
    <property type="match status" value="1"/>
</dbReference>
<accession>A4QLE5</accession>
<name>RK22_LEPVR</name>
<proteinExistence type="inferred from homology"/>
<protein>
    <recommendedName>
        <fullName evidence="2">Large ribosomal subunit protein uL22c</fullName>
    </recommendedName>
    <alternativeName>
        <fullName>50S ribosomal protein L22, chloroplastic</fullName>
    </alternativeName>
</protein>
<sequence length="160" mass="18495">MIKNRKKKSYTSVYALGQYISMSAHKARRVIDQIRGRSYEEALMILELMPYRGCYPIFKLVYSAAANASHNKGFKETNLVISKAEVNQGNTVKKLKPRARGRSFPIKRSTCHITIVVEDISFYQQYEEYLRYLKNPGCSNENRNLTCYDTYSSGGPWDKK</sequence>
<comment type="function">
    <text evidence="1">This protein binds specifically to 23S rRNA.</text>
</comment>
<comment type="function">
    <text evidence="1">The globular domain of the protein is located near the polypeptide exit tunnel on the outside of the subunit, while an extended beta-hairpin is found that lines the wall of the exit tunnel in the center of the 70S ribosome.</text>
</comment>
<comment type="subunit">
    <text evidence="1">Part of the 50S ribosomal subunit.</text>
</comment>
<comment type="subcellular location">
    <subcellularLocation>
        <location>Plastid</location>
        <location>Chloroplast</location>
    </subcellularLocation>
</comment>
<comment type="similarity">
    <text evidence="2">Belongs to the universal ribosomal protein uL22 family.</text>
</comment>